<sequence length="575" mass="63410">MDGDRGKRDSYWSTSPSGSTTKPASGWERSSKADTWLLILSFTQWALSIATVIICIIISARQGYSMKEYSMTVEALNMSSREVKESLTSLIRQEVIARAVNIQSSVQTGIPVLLNKNSRDVIQMIDKSCSRQELTQHCESTIAVHHADGIAPLEPHSFWRCPVGEPYLSSDPEISLLPGPSLLSGSTTISGCVRLPSLSIGEAIYAYSSNLITQGCADIGKSYQVLQLGYISLNSDMFPDLNPVVSHTYDINDNRKSCSVVATGTRGYQLCSMPTVDERTDYSSDGIEDLVLDVLDLKGRTKSHRYRNSEVDLDHPFSALYPSVGNGIATEGSLIFLGYGGLTTPLQGDTKCRTQGCQQVSQDTCNEALKITWLGGKQVVSVIIQVNDYLSERPKIRVTTIPITQNYLGAEGRLLKLGDRVYIYTRSSGWHSQLQIGVLDVSHPLTINWTPHEALSRPGNKECNWYNKCPKECISGVYTDAYPLSPDAANVATVTLYANTSRVNPTIMYSNTTNIINMLRIKDVQLEAAYTTTSCITHFGKGYCFHIIEINQKSLNTLQPMLFKTSIPKLCKAES</sequence>
<comment type="function">
    <text>Attaches the virus to sialic acid-containing cell receptors and thereby initiating infection. Binding of HN protein to the receptor induces a conformational change that allows the F protein to trigger virion/cell membranes fusion.</text>
</comment>
<comment type="function">
    <text>Neuraminidase activity ensures the efficient spread of the virus by dissociating the mature virions from the neuraminic acid containing glycoproteins.</text>
</comment>
<comment type="catalytic activity">
    <reaction evidence="3">
        <text>Hydrolysis of alpha-(2-&gt;3)-, alpha-(2-&gt;6)-, alpha-(2-&gt;8)- glycosidic linkages of terminal sialic acid residues in oligosaccharides, glycoproteins, glycolipids, colominic acid and synthetic substrates.</text>
        <dbReference type="EC" id="3.2.1.18"/>
    </reaction>
</comment>
<comment type="subunit">
    <text evidence="3 7 10">Homotetramer; composed of disulfide-linked homodimers (By similarity). Interacts with F protein trimer (PubMed:11040121, PubMed:8709235).</text>
</comment>
<comment type="subcellular location">
    <subcellularLocation>
        <location evidence="11">Virion membrane</location>
        <topology evidence="11">Single-pass type II membrane protein</topology>
    </subcellularLocation>
    <subcellularLocation>
        <location evidence="11">Host cell membrane</location>
        <topology evidence="11">Single-pass type II membrane protein</topology>
    </subcellularLocation>
    <text evidence="1">Folded in the endoplasmic reticulum.</text>
</comment>
<comment type="domain">
    <text evidence="3">The C-terminus (head domain) is involved in binding the cellular receptor.</text>
</comment>
<comment type="PTM">
    <text evidence="6 8">N-glycosylated; glycans consist of a mixture of high mannose-type oligosaccharides and of complex-type oligosaccharides.</text>
</comment>
<comment type="similarity">
    <text evidence="11">Belongs to the paramyxoviruses hemagglutinin-neuraminidase family.</text>
</comment>
<keyword id="KW-1015">Disulfide bond</keyword>
<keyword id="KW-0325">Glycoprotein</keyword>
<keyword id="KW-0348">Hemagglutinin</keyword>
<keyword id="KW-1032">Host cell membrane</keyword>
<keyword id="KW-1043">Host membrane</keyword>
<keyword id="KW-0945">Host-virus interaction</keyword>
<keyword id="KW-0378">Hydrolase</keyword>
<keyword id="KW-0472">Membrane</keyword>
<keyword id="KW-0735">Signal-anchor</keyword>
<keyword id="KW-0812">Transmembrane</keyword>
<keyword id="KW-1133">Transmembrane helix</keyword>
<keyword id="KW-1161">Viral attachment to host cell</keyword>
<keyword id="KW-0261">Viral envelope protein</keyword>
<keyword id="KW-0946">Virion</keyword>
<keyword id="KW-1160">Virus entry into host cell</keyword>
<accession>P04853</accession>
<accession>P06863</accession>
<accession>P27562</accession>
<reference key="1">
    <citation type="journal article" date="1985" name="FEBS Lett.">
        <title>Molecular cloning of a full-length cDNA encoding the hemagglutinin-neuraminidase glycoprotein of Sendai virus.</title>
        <authorList>
            <person name="Miura N."/>
            <person name="Nakatani Y."/>
            <person name="Ishiura M."/>
            <person name="Uchida T."/>
            <person name="Okada Y."/>
        </authorList>
    </citation>
    <scope>NUCLEOTIDE SEQUENCE [GENOMIC RNA]</scope>
</reference>
<reference key="2">
    <citation type="journal article" date="1986" name="Nucleic Acids Res.">
        <title>Determination of the complete nucleotide sequence of the Sendai virus genome RNA and the predicted amino acid sequences of the F, HN and L proteins.</title>
        <authorList>
            <person name="Shioda T."/>
            <person name="Iwasaki K."/>
            <person name="Shibuta H."/>
        </authorList>
    </citation>
    <scope>NUCLEOTIDE SEQUENCE [GENOMIC RNA]</scope>
</reference>
<reference key="3">
    <citation type="journal article" date="1990" name="Virology">
        <title>Nucleotide sequence analyses of the genes encoding the HN, M, NP, P, and L proteins of two host range mutants of Sendai virus.</title>
        <authorList>
            <person name="Middleton Y."/>
            <person name="Tashiro M."/>
            <person name="Thai T."/>
            <person name="Oh J."/>
            <person name="Seymour J."/>
            <person name="Pritzer E."/>
            <person name="Klenk H.-D."/>
            <person name="Rott R."/>
            <person name="Seto J.T."/>
        </authorList>
    </citation>
    <scope>NUCLEOTIDE SEQUENCE [GENOMIC RNA]</scope>
    <source>
        <strain>Mutant F1-R</strain>
        <strain>Mutant ts-f1</strain>
    </source>
</reference>
<reference key="4">
    <citation type="journal article" date="1991" name="Virology">
        <title>Pneumotropic revertants derived from a pantropic mutant, F1-R, of Sendai virus.</title>
        <authorList>
            <person name="Tashiro M."/>
            <person name="James I."/>
            <person name="Karri S."/>
            <person name="Wahn K."/>
            <person name="Tobita K."/>
            <person name="Klenk H.-D."/>
            <person name="Rott R."/>
            <person name="Seto J.T."/>
        </authorList>
    </citation>
    <scope>NUCLEOTIDE SEQUENCE [GENOMIC RNA]</scope>
    <source>
        <strain>Mutant F1-R / T-5 revertant</strain>
    </source>
</reference>
<reference key="5">
    <citation type="journal article" date="1980" name="Proc. Natl. Acad. Sci. U.S.A.">
        <title>Sendai virus utilizes specific sialyloligosaccharides as host cell receptor determinants.</title>
        <authorList>
            <person name="Markwell M.A.K."/>
            <person name="Paulson J.C."/>
        </authorList>
    </citation>
    <scope>BINDING TO SIALIC ACID-CONTAINING CELL RECEPTORS</scope>
</reference>
<reference key="6">
    <citation type="journal article" date="1981" name="J. Biol. Chem.">
        <title>Carbohydrate structures of HVJ (Sendai virus) glycoproteins.</title>
        <authorList>
            <person name="Yoshima H."/>
            <person name="Nakanishi M."/>
            <person name="Okada Y."/>
            <person name="Kobata A."/>
        </authorList>
    </citation>
    <scope>GLYCOSYLATION AT ASN-77; ASN-499 AND ASN-511</scope>
</reference>
<reference key="7">
    <citation type="journal article" date="1994" name="Virology">
        <title>Regions on the hemagglutinin-neuraminidase proteins of human parainfluenza virus type-1 and Sendai virus important for membrane fusion.</title>
        <authorList>
            <person name="Bousse T."/>
            <person name="Takimoto T."/>
            <person name="Gorman W.L."/>
            <person name="Takahashi T."/>
            <person name="Portner A."/>
        </authorList>
    </citation>
    <scope>MUTAGENESIS OF CYS-55</scope>
</reference>
<reference key="8">
    <citation type="journal article" date="1996" name="J. Virol.">
        <title>Functional interaction of paramyxovirus glycoproteins: identification of a domain in Sendai virus HN which promotes cell fusion.</title>
        <authorList>
            <person name="Tanabayashi K."/>
            <person name="Compans R.W."/>
        </authorList>
    </citation>
    <scope>INTERACTION WITH F PROTEIN</scope>
</reference>
<reference key="9">
    <citation type="journal article" date="1998" name="J. Virol.">
        <title>Cytoplasmic domain of Sendai virus HN protein contains a specific sequence required for its incorporation into virions.</title>
        <authorList>
            <person name="Takimoto T."/>
            <person name="Bousse T."/>
            <person name="Coronel E.C."/>
            <person name="Scroggs R.A."/>
            <person name="Portner A."/>
        </authorList>
    </citation>
    <scope>INCORPORATION IN THE VIRION</scope>
</reference>
<reference key="10">
    <citation type="journal article" date="2000" name="J. Biochem.">
        <title>Functional analysis of the individual oligosaccharide chains of sendai virus fusion protein.</title>
        <authorList>
            <person name="Segawa H."/>
            <person name="Yamashita T."/>
            <person name="Kawakita M."/>
            <person name="Taira H."/>
        </authorList>
    </citation>
    <scope>GLYCOSYLATION AT ASN-77; ASN-499 AND ASN-511</scope>
    <scope>MUTAGENESIS OF ASN-77; ASN-448; ASN-499 AND ASN-511</scope>
</reference>
<reference key="11">
    <citation type="journal article" date="2000" name="Virology">
        <title>Assembly of Sendai virus: M protein interacts with F and HN proteins and with the cytoplasmic tail and transmembrane domain of F protein.</title>
        <authorList>
            <person name="Ali A."/>
            <person name="Nayak D.P."/>
        </authorList>
    </citation>
    <scope>INTERACTION WITH M PROTEIN</scope>
</reference>
<name>HN_SENDZ</name>
<protein>
    <recommendedName>
        <fullName>Hemagglutinin-neuraminidase</fullName>
        <shortName>HN protein</shortName>
        <ecNumber evidence="3">3.2.1.18</ecNumber>
    </recommendedName>
</protein>
<gene>
    <name type="primary">HN</name>
</gene>
<dbReference type="EC" id="3.2.1.18" evidence="3"/>
<dbReference type="EMBL" id="X03614">
    <property type="protein sequence ID" value="CAA27274.1"/>
    <property type="molecule type" value="Genomic_RNA"/>
</dbReference>
<dbReference type="EMBL" id="M30202">
    <property type="protein sequence ID" value="AAB06282.1"/>
    <property type="molecule type" value="Genomic_RNA"/>
</dbReference>
<dbReference type="EMBL" id="M30203">
    <property type="protein sequence ID" value="AAB06288.1"/>
    <property type="molecule type" value="Genomic_RNA"/>
</dbReference>
<dbReference type="EMBL" id="M30204">
    <property type="protein sequence ID" value="AAB06200.1"/>
    <property type="molecule type" value="Genomic_RNA"/>
</dbReference>
<dbReference type="EMBL" id="M69046">
    <property type="protein sequence ID" value="AAB06294.1"/>
    <property type="molecule type" value="Genomic_RNA"/>
</dbReference>
<dbReference type="EMBL" id="X02808">
    <property type="protein sequence ID" value="CAA26576.1"/>
    <property type="molecule type" value="mRNA"/>
</dbReference>
<dbReference type="PIR" id="A00878">
    <property type="entry name" value="HNNZSZ"/>
</dbReference>
<dbReference type="PIR" id="A24004">
    <property type="entry name" value="HNNZSH"/>
</dbReference>
<dbReference type="SMR" id="P04853"/>
<dbReference type="CAZy" id="GH83">
    <property type="family name" value="Glycoside Hydrolase Family 83"/>
</dbReference>
<dbReference type="GlyConnect" id="210">
    <property type="glycosylation" value="8 N-Linked glycans"/>
</dbReference>
<dbReference type="GlyCosmos" id="P04853">
    <property type="glycosylation" value="3 sites, 15 glycans"/>
</dbReference>
<dbReference type="iPTMnet" id="P04853"/>
<dbReference type="Reactome" id="R-HSA-198933">
    <property type="pathway name" value="Immunoregulatory interactions between a Lymphoid and a non-Lymphoid cell"/>
</dbReference>
<dbReference type="SABIO-RK" id="P04853"/>
<dbReference type="Proteomes" id="UP000110830">
    <property type="component" value="Genome"/>
</dbReference>
<dbReference type="Proteomes" id="UP000163956">
    <property type="component" value="Genome"/>
</dbReference>
<dbReference type="Proteomes" id="UP000169749">
    <property type="component" value="Genome"/>
</dbReference>
<dbReference type="Proteomes" id="UP000181310">
    <property type="component" value="Genome"/>
</dbReference>
<dbReference type="GO" id="GO:0020002">
    <property type="term" value="C:host cell plasma membrane"/>
    <property type="evidence" value="ECO:0007669"/>
    <property type="project" value="UniProtKB-SubCell"/>
</dbReference>
<dbReference type="GO" id="GO:0016020">
    <property type="term" value="C:membrane"/>
    <property type="evidence" value="ECO:0007669"/>
    <property type="project" value="UniProtKB-KW"/>
</dbReference>
<dbReference type="GO" id="GO:0019031">
    <property type="term" value="C:viral envelope"/>
    <property type="evidence" value="ECO:0007669"/>
    <property type="project" value="UniProtKB-KW"/>
</dbReference>
<dbReference type="GO" id="GO:0055036">
    <property type="term" value="C:virion membrane"/>
    <property type="evidence" value="ECO:0000304"/>
    <property type="project" value="Reactome"/>
</dbReference>
<dbReference type="GO" id="GO:0004308">
    <property type="term" value="F:exo-alpha-sialidase activity"/>
    <property type="evidence" value="ECO:0007669"/>
    <property type="project" value="UniProtKB-EC"/>
</dbReference>
<dbReference type="GO" id="GO:0046789">
    <property type="term" value="F:host cell surface receptor binding"/>
    <property type="evidence" value="ECO:0007669"/>
    <property type="project" value="InterPro"/>
</dbReference>
<dbReference type="GO" id="GO:0046718">
    <property type="term" value="P:symbiont entry into host cell"/>
    <property type="evidence" value="ECO:0007669"/>
    <property type="project" value="UniProtKB-KW"/>
</dbReference>
<dbReference type="GO" id="GO:0019062">
    <property type="term" value="P:virion attachment to host cell"/>
    <property type="evidence" value="ECO:0007669"/>
    <property type="project" value="UniProtKB-KW"/>
</dbReference>
<dbReference type="CDD" id="cd15469">
    <property type="entry name" value="HN"/>
    <property type="match status" value="1"/>
</dbReference>
<dbReference type="FunFam" id="2.120.10.10:FF:000015">
    <property type="entry name" value="Hemagglutinin-neuraminidase"/>
    <property type="match status" value="1"/>
</dbReference>
<dbReference type="Gene3D" id="2.120.10.10">
    <property type="match status" value="1"/>
</dbReference>
<dbReference type="InterPro" id="IPR016285">
    <property type="entry name" value="Hemagglutn-neuramid"/>
</dbReference>
<dbReference type="InterPro" id="IPR000665">
    <property type="entry name" value="Hemagglutn/HN"/>
</dbReference>
<dbReference type="InterPro" id="IPR036278">
    <property type="entry name" value="Sialidase_sf"/>
</dbReference>
<dbReference type="Pfam" id="PF00423">
    <property type="entry name" value="HN"/>
    <property type="match status" value="1"/>
</dbReference>
<dbReference type="PIRSF" id="PIRSF001072">
    <property type="entry name" value="Hemagglut-neuramid_paramyxoV"/>
    <property type="match status" value="1"/>
</dbReference>
<dbReference type="SUPFAM" id="SSF50939">
    <property type="entry name" value="Sialidases"/>
    <property type="match status" value="1"/>
</dbReference>
<organism>
    <name type="scientific">Sendai virus (strain Z)</name>
    <name type="common">SeV</name>
    <name type="synonym">Sendai virus (strain HVJ)</name>
    <dbReference type="NCBI Taxonomy" id="11198"/>
    <lineage>
        <taxon>Viruses</taxon>
        <taxon>Riboviria</taxon>
        <taxon>Orthornavirae</taxon>
        <taxon>Negarnaviricota</taxon>
        <taxon>Haploviricotina</taxon>
        <taxon>Monjiviricetes</taxon>
        <taxon>Mononegavirales</taxon>
        <taxon>Paramyxoviridae</taxon>
        <taxon>Feraresvirinae</taxon>
        <taxon>Respirovirus</taxon>
        <taxon>Respirovirus muris</taxon>
    </lineage>
</organism>
<proteinExistence type="evidence at protein level"/>
<feature type="chain" id="PRO_0000142640" description="Hemagglutinin-neuraminidase">
    <location>
        <begin position="1"/>
        <end position="575"/>
    </location>
</feature>
<feature type="topological domain" description="Intravirion" evidence="4">
    <location>
        <begin position="1"/>
        <end position="37"/>
    </location>
</feature>
<feature type="transmembrane region" description="Helical; Signal-anchor for type II membrane protein" evidence="4">
    <location>
        <begin position="38"/>
        <end position="58"/>
    </location>
</feature>
<feature type="topological domain" description="Virion surface" evidence="4">
    <location>
        <begin position="59"/>
        <end position="575"/>
    </location>
</feature>
<feature type="region of interest" description="Disordered" evidence="5">
    <location>
        <begin position="1"/>
        <end position="27"/>
    </location>
</feature>
<feature type="region of interest" description="Incorporation in virion">
    <location>
        <begin position="10"/>
        <end position="14"/>
    </location>
</feature>
<feature type="region of interest" description="Interaction with F protein">
    <location>
        <begin position="59"/>
        <end position="140"/>
    </location>
</feature>
<feature type="region of interest" description="Involved in neuraminidase activity" evidence="2">
    <location>
        <begin position="254"/>
        <end position="259"/>
    </location>
</feature>
<feature type="compositionally biased region" description="Basic and acidic residues" evidence="5">
    <location>
        <begin position="1"/>
        <end position="10"/>
    </location>
</feature>
<feature type="compositionally biased region" description="Polar residues" evidence="5">
    <location>
        <begin position="11"/>
        <end position="23"/>
    </location>
</feature>
<feature type="glycosylation site" description="N-linked (GlcNAc...) asparagine; by host" evidence="6 8">
    <location>
        <position position="77"/>
    </location>
</feature>
<feature type="glycosylation site" description="N-linked (GlcNAc...) asparagine; by host" evidence="6 8">
    <location>
        <position position="499"/>
    </location>
</feature>
<feature type="glycosylation site" description="N-linked (GlcNAc...) asparagine; by host" evidence="6 8">
    <location>
        <position position="511"/>
    </location>
</feature>
<feature type="disulfide bond" description="Interchain" evidence="4">
    <location>
        <position position="129"/>
    </location>
</feature>
<feature type="disulfide bond" evidence="3">
    <location>
        <begin position="192"/>
        <end position="216"/>
    </location>
</feature>
<feature type="disulfide bond" evidence="3">
    <location>
        <begin position="258"/>
        <end position="271"/>
    </location>
</feature>
<feature type="disulfide bond" evidence="3">
    <location>
        <begin position="357"/>
        <end position="469"/>
    </location>
</feature>
<feature type="disulfide bond" evidence="3">
    <location>
        <begin position="463"/>
        <end position="473"/>
    </location>
</feature>
<feature type="disulfide bond" evidence="3">
    <location>
        <begin position="535"/>
        <end position="544"/>
    </location>
</feature>
<feature type="sequence variant" description="In strain: wild-type, mutant F1-R, mutant ts-f1 and mutant F1-R / T-5 revertant.">
    <original>P</original>
    <variation>L</variation>
    <location>
        <position position="23"/>
    </location>
</feature>
<feature type="sequence variant" description="In strain: wild-type, mutant F1-R, mutant ts-f1 and mutant F1-R / T-5 revertant.">
    <original>A</original>
    <variation>V</variation>
    <location>
        <position position="33"/>
    </location>
</feature>
<feature type="sequence variant" description="In strain: wild-type, mutant F1-R, mutant ts-f1 and mutant F1-R / T-5 revertant.">
    <original>D</original>
    <variation>E</variation>
    <location>
        <position position="148"/>
    </location>
</feature>
<feature type="sequence variant">
    <original>F</original>
    <variation>I</variation>
    <location>
        <position position="238"/>
    </location>
</feature>
<feature type="sequence variant" description="In strain: mutant F1-R, mutant ts-f1 and mutant F1-R / T-5 revertant.">
    <original>Q</original>
    <variation>E</variation>
    <location>
        <position position="405"/>
    </location>
</feature>
<feature type="mutagenesis site" description="45% loss of cell surface expression; 88% loss of fusion promotion activity." evidence="9">
    <original>C</original>
    <variation>W</variation>
    <location>
        <position position="55"/>
    </location>
</feature>
<feature type="mutagenesis site" description="Loss of glycosylation." evidence="6">
    <original>N</original>
    <variation>G</variation>
    <location>
        <position position="77"/>
    </location>
</feature>
<feature type="mutagenesis site" description="No effect." evidence="6">
    <original>N</original>
    <variation>G</variation>
    <location>
        <position position="448"/>
    </location>
</feature>
<feature type="mutagenesis site" description="Loss of glycosylation; 88% loss of neuraminidase activity." evidence="6">
    <original>N</original>
    <variation>G</variation>
    <location>
        <position position="499"/>
    </location>
</feature>
<feature type="mutagenesis site" description="Loss of glycosylation; 88% loss of neuraminidase activity." evidence="6">
    <original>N</original>
    <variation>G</variation>
    <location>
        <position position="511"/>
    </location>
</feature>
<organismHost>
    <name type="scientific">Cavia cutleri</name>
    <name type="common">Guinea pig</name>
    <dbReference type="NCBI Taxonomy" id="10144"/>
</organismHost>
<organismHost>
    <name type="scientific">Cricetidae sp.</name>
    <name type="common">Hamster</name>
    <dbReference type="NCBI Taxonomy" id="36483"/>
</organismHost>
<organismHost>
    <name type="scientific">Mus musculus</name>
    <name type="common">Mouse</name>
    <dbReference type="NCBI Taxonomy" id="10090"/>
</organismHost>
<organismHost>
    <name type="scientific">Rattus norvegicus</name>
    <name type="common">Rat</name>
    <dbReference type="NCBI Taxonomy" id="10116"/>
</organismHost>
<evidence type="ECO:0000250" key="1"/>
<evidence type="ECO:0000250" key="2">
    <source>
        <dbReference type="UniProtKB" id="Q91UL0"/>
    </source>
</evidence>
<evidence type="ECO:0000250" key="3">
    <source>
        <dbReference type="UniProtKB" id="Q9WAF5"/>
    </source>
</evidence>
<evidence type="ECO:0000255" key="4"/>
<evidence type="ECO:0000256" key="5">
    <source>
        <dbReference type="SAM" id="MobiDB-lite"/>
    </source>
</evidence>
<evidence type="ECO:0000269" key="6">
    <source>
    </source>
</evidence>
<evidence type="ECO:0000269" key="7">
    <source>
    </source>
</evidence>
<evidence type="ECO:0000269" key="8">
    <source>
    </source>
</evidence>
<evidence type="ECO:0000269" key="9">
    <source>
    </source>
</evidence>
<evidence type="ECO:0000269" key="10">
    <source>
    </source>
</evidence>
<evidence type="ECO:0000305" key="11"/>